<keyword id="KW-0408">Iron</keyword>
<keyword id="KW-0411">Iron-sulfur</keyword>
<keyword id="KW-0479">Metal-binding</keyword>
<keyword id="KW-0496">Mitochondrion</keyword>
<keyword id="KW-0539">Nucleus</keyword>
<keyword id="KW-0663">Pyridoxal phosphate</keyword>
<keyword id="KW-1185">Reference proteome</keyword>
<keyword id="KW-0808">Transferase</keyword>
<keyword id="KW-0809">Transit peptide</keyword>
<sequence length="462" mass="51074">MQKVLGRIQAQVLRSRATNALANVVRHEATSSRTAAKPAATSKEFRERQVRFNIKNEQTEGRPLYLDAQATTPMDPRVLDAMLPYLTNFYGNPHSRTHAYGWETESAVEKAREQVATLIGADPKEIIFTSGATESNNIAVKGVARFYGTKKRHVITTQTEHKCVLDSCRALENEGFKVTYLPVLANGLIDLQQLEETITSETSLVSIMTVNNEIGVRQPVDEIGKLCRSRRVFFHTDAAQAVGKVPLDVNAMNIDLMSISGHKIYGPKGVGALYVRRRPRVRLEPIQSGGGQERGLRSGTVPAPLAVGLGAAAELSLREMDYDKKWVDFLSNRLLDRISSALPHVIRNGDAKATYNGCLNLSFAYVEGESLLMALKDVALSSGSACTSASLEPSYVLRAIGTDEDLAHSSIRFGIGRFTTVEEVDYTADKCIKHVERLREMSPLWEMVQEGIDLKTIQWSQH</sequence>
<reference key="1">
    <citation type="journal article" date="2000" name="Science">
        <title>The genome sequence of Drosophila melanogaster.</title>
        <authorList>
            <person name="Adams M.D."/>
            <person name="Celniker S.E."/>
            <person name="Holt R.A."/>
            <person name="Evans C.A."/>
            <person name="Gocayne J.D."/>
            <person name="Amanatides P.G."/>
            <person name="Scherer S.E."/>
            <person name="Li P.W."/>
            <person name="Hoskins R.A."/>
            <person name="Galle R.F."/>
            <person name="George R.A."/>
            <person name="Lewis S.E."/>
            <person name="Richards S."/>
            <person name="Ashburner M."/>
            <person name="Henderson S.N."/>
            <person name="Sutton G.G."/>
            <person name="Wortman J.R."/>
            <person name="Yandell M.D."/>
            <person name="Zhang Q."/>
            <person name="Chen L.X."/>
            <person name="Brandon R.C."/>
            <person name="Rogers Y.-H.C."/>
            <person name="Blazej R.G."/>
            <person name="Champe M."/>
            <person name="Pfeiffer B.D."/>
            <person name="Wan K.H."/>
            <person name="Doyle C."/>
            <person name="Baxter E.G."/>
            <person name="Helt G."/>
            <person name="Nelson C.R."/>
            <person name="Miklos G.L.G."/>
            <person name="Abril J.F."/>
            <person name="Agbayani A."/>
            <person name="An H.-J."/>
            <person name="Andrews-Pfannkoch C."/>
            <person name="Baldwin D."/>
            <person name="Ballew R.M."/>
            <person name="Basu A."/>
            <person name="Baxendale J."/>
            <person name="Bayraktaroglu L."/>
            <person name="Beasley E.M."/>
            <person name="Beeson K.Y."/>
            <person name="Benos P.V."/>
            <person name="Berman B.P."/>
            <person name="Bhandari D."/>
            <person name="Bolshakov S."/>
            <person name="Borkova D."/>
            <person name="Botchan M.R."/>
            <person name="Bouck J."/>
            <person name="Brokstein P."/>
            <person name="Brottier P."/>
            <person name="Burtis K.C."/>
            <person name="Busam D.A."/>
            <person name="Butler H."/>
            <person name="Cadieu E."/>
            <person name="Center A."/>
            <person name="Chandra I."/>
            <person name="Cherry J.M."/>
            <person name="Cawley S."/>
            <person name="Dahlke C."/>
            <person name="Davenport L.B."/>
            <person name="Davies P."/>
            <person name="de Pablos B."/>
            <person name="Delcher A."/>
            <person name="Deng Z."/>
            <person name="Mays A.D."/>
            <person name="Dew I."/>
            <person name="Dietz S.M."/>
            <person name="Dodson K."/>
            <person name="Doup L.E."/>
            <person name="Downes M."/>
            <person name="Dugan-Rocha S."/>
            <person name="Dunkov B.C."/>
            <person name="Dunn P."/>
            <person name="Durbin K.J."/>
            <person name="Evangelista C.C."/>
            <person name="Ferraz C."/>
            <person name="Ferriera S."/>
            <person name="Fleischmann W."/>
            <person name="Fosler C."/>
            <person name="Gabrielian A.E."/>
            <person name="Garg N.S."/>
            <person name="Gelbart W.M."/>
            <person name="Glasser K."/>
            <person name="Glodek A."/>
            <person name="Gong F."/>
            <person name="Gorrell J.H."/>
            <person name="Gu Z."/>
            <person name="Guan P."/>
            <person name="Harris M."/>
            <person name="Harris N.L."/>
            <person name="Harvey D.A."/>
            <person name="Heiman T.J."/>
            <person name="Hernandez J.R."/>
            <person name="Houck J."/>
            <person name="Hostin D."/>
            <person name="Houston K.A."/>
            <person name="Howland T.J."/>
            <person name="Wei M.-H."/>
            <person name="Ibegwam C."/>
            <person name="Jalali M."/>
            <person name="Kalush F."/>
            <person name="Karpen G.H."/>
            <person name="Ke Z."/>
            <person name="Kennison J.A."/>
            <person name="Ketchum K.A."/>
            <person name="Kimmel B.E."/>
            <person name="Kodira C.D."/>
            <person name="Kraft C.L."/>
            <person name="Kravitz S."/>
            <person name="Kulp D."/>
            <person name="Lai Z."/>
            <person name="Lasko P."/>
            <person name="Lei Y."/>
            <person name="Levitsky A.A."/>
            <person name="Li J.H."/>
            <person name="Li Z."/>
            <person name="Liang Y."/>
            <person name="Lin X."/>
            <person name="Liu X."/>
            <person name="Mattei B."/>
            <person name="McIntosh T.C."/>
            <person name="McLeod M.P."/>
            <person name="McPherson D."/>
            <person name="Merkulov G."/>
            <person name="Milshina N.V."/>
            <person name="Mobarry C."/>
            <person name="Morris J."/>
            <person name="Moshrefi A."/>
            <person name="Mount S.M."/>
            <person name="Moy M."/>
            <person name="Murphy B."/>
            <person name="Murphy L."/>
            <person name="Muzny D.M."/>
            <person name="Nelson D.L."/>
            <person name="Nelson D.R."/>
            <person name="Nelson K.A."/>
            <person name="Nixon K."/>
            <person name="Nusskern D.R."/>
            <person name="Pacleb J.M."/>
            <person name="Palazzolo M."/>
            <person name="Pittman G.S."/>
            <person name="Pan S."/>
            <person name="Pollard J."/>
            <person name="Puri V."/>
            <person name="Reese M.G."/>
            <person name="Reinert K."/>
            <person name="Remington K."/>
            <person name="Saunders R.D.C."/>
            <person name="Scheeler F."/>
            <person name="Shen H."/>
            <person name="Shue B.C."/>
            <person name="Siden-Kiamos I."/>
            <person name="Simpson M."/>
            <person name="Skupski M.P."/>
            <person name="Smith T.J."/>
            <person name="Spier E."/>
            <person name="Spradling A.C."/>
            <person name="Stapleton M."/>
            <person name="Strong R."/>
            <person name="Sun E."/>
            <person name="Svirskas R."/>
            <person name="Tector C."/>
            <person name="Turner R."/>
            <person name="Venter E."/>
            <person name="Wang A.H."/>
            <person name="Wang X."/>
            <person name="Wang Z.-Y."/>
            <person name="Wassarman D.A."/>
            <person name="Weinstock G.M."/>
            <person name="Weissenbach J."/>
            <person name="Williams S.M."/>
            <person name="Woodage T."/>
            <person name="Worley K.C."/>
            <person name="Wu D."/>
            <person name="Yang S."/>
            <person name="Yao Q.A."/>
            <person name="Ye J."/>
            <person name="Yeh R.-F."/>
            <person name="Zaveri J.S."/>
            <person name="Zhan M."/>
            <person name="Zhang G."/>
            <person name="Zhao Q."/>
            <person name="Zheng L."/>
            <person name="Zheng X.H."/>
            <person name="Zhong F.N."/>
            <person name="Zhong W."/>
            <person name="Zhou X."/>
            <person name="Zhu S.C."/>
            <person name="Zhu X."/>
            <person name="Smith H.O."/>
            <person name="Gibbs R.A."/>
            <person name="Myers E.W."/>
            <person name="Rubin G.M."/>
            <person name="Venter J.C."/>
        </authorList>
    </citation>
    <scope>NUCLEOTIDE SEQUENCE [LARGE SCALE GENOMIC DNA]</scope>
    <source>
        <strain>Berkeley</strain>
    </source>
</reference>
<reference key="2">
    <citation type="journal article" date="2002" name="Genome Biol.">
        <title>Annotation of the Drosophila melanogaster euchromatic genome: a systematic review.</title>
        <authorList>
            <person name="Misra S."/>
            <person name="Crosby M.A."/>
            <person name="Mungall C.J."/>
            <person name="Matthews B.B."/>
            <person name="Campbell K.S."/>
            <person name="Hradecky P."/>
            <person name="Huang Y."/>
            <person name="Kaminker J.S."/>
            <person name="Millburn G.H."/>
            <person name="Prochnik S.E."/>
            <person name="Smith C.D."/>
            <person name="Tupy J.L."/>
            <person name="Whitfield E.J."/>
            <person name="Bayraktaroglu L."/>
            <person name="Berman B.P."/>
            <person name="Bettencourt B.R."/>
            <person name="Celniker S.E."/>
            <person name="de Grey A.D.N.J."/>
            <person name="Drysdale R.A."/>
            <person name="Harris N.L."/>
            <person name="Richter J."/>
            <person name="Russo S."/>
            <person name="Schroeder A.J."/>
            <person name="Shu S.Q."/>
            <person name="Stapleton M."/>
            <person name="Yamada C."/>
            <person name="Ashburner M."/>
            <person name="Gelbart W.M."/>
            <person name="Rubin G.M."/>
            <person name="Lewis S.E."/>
        </authorList>
    </citation>
    <scope>GENOME REANNOTATION</scope>
    <source>
        <strain>Berkeley</strain>
    </source>
</reference>
<reference key="3">
    <citation type="journal article" date="2002" name="Genome Biol.">
        <title>A Drosophila full-length cDNA resource.</title>
        <authorList>
            <person name="Stapleton M."/>
            <person name="Carlson J.W."/>
            <person name="Brokstein P."/>
            <person name="Yu C."/>
            <person name="Champe M."/>
            <person name="George R.A."/>
            <person name="Guarin H."/>
            <person name="Kronmiller B."/>
            <person name="Pacleb J.M."/>
            <person name="Park S."/>
            <person name="Wan K.H."/>
            <person name="Rubin G.M."/>
            <person name="Celniker S.E."/>
        </authorList>
    </citation>
    <scope>NUCLEOTIDE SEQUENCE [LARGE SCALE MRNA]</scope>
    <source>
        <strain>Berkeley</strain>
        <tissue>Embryo</tissue>
    </source>
</reference>
<reference key="4">
    <citation type="journal article" date="2010" name="Proc. Natl. Acad. Sci. U.S.A.">
        <title>Adaptive impact of the chimeric gene Quetzalcoatl in Drosophila melanogaster.</title>
        <authorList>
            <person name="Rogers R.L."/>
            <person name="Bedford T."/>
            <person name="Lyons A.M."/>
            <person name="Hartl D.L."/>
        </authorList>
    </citation>
    <scope>TISSUE SPECIFICITY</scope>
</reference>
<reference key="5">
    <citation type="journal article" date="2018" name="Front. Physiol.">
        <title>Iron Sulfur and Molybdenum Cofactor Enzymes Regulate the Drosophila Life Cycle by Controlling Cell Metabolism.</title>
        <authorList>
            <person name="Marelja Z."/>
            <person name="Leimkuehler S."/>
            <person name="Missirlis F."/>
        </authorList>
    </citation>
    <scope>FUNCTION</scope>
    <scope>CATALYTIC ACTIVITY</scope>
    <scope>COFACTOR</scope>
    <scope>ACTIVITY REGULATION</scope>
    <scope>BIOPHYSICOCHEMICAL PROPERTIES</scope>
    <scope>INTERACTION WITH BCN92; FH AND ISCU</scope>
    <scope>MUTAGENESIS OF 1-MET--ASN-53</scope>
</reference>
<organism evidence="12">
    <name type="scientific">Drosophila melanogaster</name>
    <name type="common">Fruit fly</name>
    <dbReference type="NCBI Taxonomy" id="7227"/>
    <lineage>
        <taxon>Eukaryota</taxon>
        <taxon>Metazoa</taxon>
        <taxon>Ecdysozoa</taxon>
        <taxon>Arthropoda</taxon>
        <taxon>Hexapoda</taxon>
        <taxon>Insecta</taxon>
        <taxon>Pterygota</taxon>
        <taxon>Neoptera</taxon>
        <taxon>Endopterygota</taxon>
        <taxon>Diptera</taxon>
        <taxon>Brachycera</taxon>
        <taxon>Muscomorpha</taxon>
        <taxon>Ephydroidea</taxon>
        <taxon>Drosophilidae</taxon>
        <taxon>Drosophila</taxon>
        <taxon>Sophophora</taxon>
    </lineage>
</organism>
<feature type="transit peptide" description="Mitochondrion" evidence="5">
    <location>
        <begin position="1"/>
        <end status="unknown"/>
    </location>
</feature>
<feature type="chain" id="PRO_0000001298" description="Cysteine desulfurase, mitochondrial">
    <location>
        <begin status="unknown"/>
        <end position="462"/>
    </location>
</feature>
<feature type="active site" description="Cysteine persulfide intermediate" evidence="2">
    <location>
        <position position="386"/>
    </location>
</feature>
<feature type="binding site" evidence="3">
    <location>
        <begin position="132"/>
        <end position="133"/>
    </location>
    <ligand>
        <name>pyridoxal 5'-phosphate</name>
        <dbReference type="ChEBI" id="CHEBI:597326"/>
    </ligand>
</feature>
<feature type="binding site" evidence="1">
    <location>
        <position position="212"/>
    </location>
    <ligand>
        <name>pyridoxal 5'-phosphate</name>
        <dbReference type="ChEBI" id="CHEBI:597326"/>
    </ligand>
</feature>
<feature type="binding site" evidence="3">
    <location>
        <position position="240"/>
    </location>
    <ligand>
        <name>pyridoxal 5'-phosphate</name>
        <dbReference type="ChEBI" id="CHEBI:597326"/>
    </ligand>
</feature>
<feature type="binding site" evidence="3">
    <location>
        <begin position="260"/>
        <end position="262"/>
    </location>
    <ligand>
        <name>pyridoxal 5'-phosphate</name>
        <dbReference type="ChEBI" id="CHEBI:597326"/>
    </ligand>
</feature>
<feature type="binding site" evidence="3">
    <location>
        <position position="300"/>
    </location>
    <ligand>
        <name>pyridoxal 5'-phosphate</name>
        <dbReference type="ChEBI" id="CHEBI:597326"/>
    </ligand>
</feature>
<feature type="binding site" description="via persulfide group" evidence="1">
    <location>
        <position position="386"/>
    </location>
    <ligand>
        <name>[2Fe-2S] cluster</name>
        <dbReference type="ChEBI" id="CHEBI:190135"/>
    </ligand>
</feature>
<feature type="modified residue" description="N6-(pyridoxal phosphate)lysine" evidence="3">
    <location>
        <position position="263"/>
    </location>
</feature>
<feature type="mutagenesis site" description="Retains interaction with bcn92 and IscU." evidence="7">
    <location>
        <begin position="1"/>
        <end position="53"/>
    </location>
</feature>
<protein>
    <recommendedName>
        <fullName evidence="9">Cysteine desulfurase, mitochondrial</fullName>
        <ecNumber evidence="7">2.8.1.7</ecNumber>
    </recommendedName>
</protein>
<proteinExistence type="evidence at protein level"/>
<name>NFS1_DROME</name>
<dbReference type="EC" id="2.8.1.7" evidence="7"/>
<dbReference type="EMBL" id="AE014134">
    <property type="protein sequence ID" value="AAF53143.1"/>
    <property type="molecule type" value="Genomic_DNA"/>
</dbReference>
<dbReference type="EMBL" id="AY113363">
    <property type="protein sequence ID" value="AAM29368.1"/>
    <property type="molecule type" value="mRNA"/>
</dbReference>
<dbReference type="RefSeq" id="NP_609533.1">
    <property type="nucleotide sequence ID" value="NM_135689.2"/>
</dbReference>
<dbReference type="SMR" id="Q9VKD3"/>
<dbReference type="BioGRID" id="60665">
    <property type="interactions" value="60"/>
</dbReference>
<dbReference type="FunCoup" id="Q9VKD3">
    <property type="interactions" value="1735"/>
</dbReference>
<dbReference type="IntAct" id="Q9VKD3">
    <property type="interactions" value="72"/>
</dbReference>
<dbReference type="STRING" id="7227.FBpp0079874"/>
<dbReference type="PaxDb" id="7227-FBpp0079874"/>
<dbReference type="DNASU" id="34613"/>
<dbReference type="EnsemblMetazoa" id="FBtr0080290">
    <property type="protein sequence ID" value="FBpp0079874"/>
    <property type="gene ID" value="FBgn0032393"/>
</dbReference>
<dbReference type="GeneID" id="34613"/>
<dbReference type="KEGG" id="dme:Dmel_CG12264"/>
<dbReference type="UCSC" id="CG12264-RA">
    <property type="organism name" value="d. melanogaster"/>
</dbReference>
<dbReference type="AGR" id="FB:FBgn0032393"/>
<dbReference type="CTD" id="9054"/>
<dbReference type="FlyBase" id="FBgn0032393">
    <property type="gene designation" value="Nfs1"/>
</dbReference>
<dbReference type="VEuPathDB" id="VectorBase:FBgn0032393"/>
<dbReference type="eggNOG" id="KOG1549">
    <property type="taxonomic scope" value="Eukaryota"/>
</dbReference>
<dbReference type="GeneTree" id="ENSGT00940000155740"/>
<dbReference type="HOGENOM" id="CLU_003433_0_2_1"/>
<dbReference type="InParanoid" id="Q9VKD3"/>
<dbReference type="OMA" id="KGLYWAR"/>
<dbReference type="OrthoDB" id="10250117at2759"/>
<dbReference type="PhylomeDB" id="Q9VKD3"/>
<dbReference type="Reactome" id="R-DME-1362409">
    <property type="pathway name" value="Mitochondrial iron-sulfur cluster biogenesis"/>
</dbReference>
<dbReference type="Reactome" id="R-DME-947581">
    <property type="pathway name" value="Molybdenum cofactor biosynthesis"/>
</dbReference>
<dbReference type="Reactome" id="R-DME-9865881">
    <property type="pathway name" value="Complex III assembly"/>
</dbReference>
<dbReference type="SABIO-RK" id="Q9VKD3"/>
<dbReference type="BioGRID-ORCS" id="34613">
    <property type="hits" value="2 hits in 3 CRISPR screens"/>
</dbReference>
<dbReference type="GenomeRNAi" id="34613"/>
<dbReference type="PRO" id="PR:Q9VKD3"/>
<dbReference type="Proteomes" id="UP000000803">
    <property type="component" value="Chromosome 2L"/>
</dbReference>
<dbReference type="Bgee" id="FBgn0032393">
    <property type="expression patterns" value="Expressed in adult anterior midgut class II enteroendocrine cell in adult midgut (Drosophila) and 145 other cell types or tissues"/>
</dbReference>
<dbReference type="GO" id="GO:0005829">
    <property type="term" value="C:cytosol"/>
    <property type="evidence" value="ECO:0000314"/>
    <property type="project" value="FlyBase"/>
</dbReference>
<dbReference type="GO" id="GO:0099128">
    <property type="term" value="C:mitochondrial [2Fe-2S] assembly complex"/>
    <property type="evidence" value="ECO:0000353"/>
    <property type="project" value="FlyBase"/>
</dbReference>
<dbReference type="GO" id="GO:0005759">
    <property type="term" value="C:mitochondrial matrix"/>
    <property type="evidence" value="ECO:0000305"/>
    <property type="project" value="FlyBase"/>
</dbReference>
<dbReference type="GO" id="GO:0005739">
    <property type="term" value="C:mitochondrion"/>
    <property type="evidence" value="ECO:0000250"/>
    <property type="project" value="FlyBase"/>
</dbReference>
<dbReference type="GO" id="GO:0005634">
    <property type="term" value="C:nucleus"/>
    <property type="evidence" value="ECO:0000314"/>
    <property type="project" value="FlyBase"/>
</dbReference>
<dbReference type="GO" id="GO:0031071">
    <property type="term" value="F:cysteine desulfurase activity"/>
    <property type="evidence" value="ECO:0000314"/>
    <property type="project" value="FlyBase"/>
</dbReference>
<dbReference type="GO" id="GO:0051536">
    <property type="term" value="F:iron-sulfur cluster binding"/>
    <property type="evidence" value="ECO:0007669"/>
    <property type="project" value="UniProtKB-KW"/>
</dbReference>
<dbReference type="GO" id="GO:0046872">
    <property type="term" value="F:metal ion binding"/>
    <property type="evidence" value="ECO:0007669"/>
    <property type="project" value="UniProtKB-KW"/>
</dbReference>
<dbReference type="GO" id="GO:0030170">
    <property type="term" value="F:pyridoxal phosphate binding"/>
    <property type="evidence" value="ECO:0007669"/>
    <property type="project" value="InterPro"/>
</dbReference>
<dbReference type="GO" id="GO:0097163">
    <property type="term" value="F:sulfur carrier activity"/>
    <property type="evidence" value="ECO:0000250"/>
    <property type="project" value="FlyBase"/>
</dbReference>
<dbReference type="GO" id="GO:0044571">
    <property type="term" value="P:[2Fe-2S] cluster assembly"/>
    <property type="evidence" value="ECO:0000314"/>
    <property type="project" value="FlyBase"/>
</dbReference>
<dbReference type="GO" id="GO:0016226">
    <property type="term" value="P:iron-sulfur cluster assembly"/>
    <property type="evidence" value="ECO:0000318"/>
    <property type="project" value="GO_Central"/>
</dbReference>
<dbReference type="GO" id="GO:0070903">
    <property type="term" value="P:mitochondrial tRNA thio-modification"/>
    <property type="evidence" value="ECO:0000250"/>
    <property type="project" value="FlyBase"/>
</dbReference>
<dbReference type="FunFam" id="3.40.640.10:FF:000003">
    <property type="entry name" value="Cysteine desulfurase IscS"/>
    <property type="match status" value="1"/>
</dbReference>
<dbReference type="FunFam" id="3.90.1150.10:FF:000002">
    <property type="entry name" value="Cysteine desulfurase IscS"/>
    <property type="match status" value="1"/>
</dbReference>
<dbReference type="Gene3D" id="3.90.1150.10">
    <property type="entry name" value="Aspartate Aminotransferase, domain 1"/>
    <property type="match status" value="1"/>
</dbReference>
<dbReference type="Gene3D" id="3.40.640.10">
    <property type="entry name" value="Type I PLP-dependent aspartate aminotransferase-like (Major domain)"/>
    <property type="match status" value="1"/>
</dbReference>
<dbReference type="HAMAP" id="MF_00331">
    <property type="entry name" value="Cys_desulf_IscS"/>
    <property type="match status" value="1"/>
</dbReference>
<dbReference type="InterPro" id="IPR000192">
    <property type="entry name" value="Aminotrans_V_dom"/>
</dbReference>
<dbReference type="InterPro" id="IPR020578">
    <property type="entry name" value="Aminotrans_V_PyrdxlP_BS"/>
</dbReference>
<dbReference type="InterPro" id="IPR010240">
    <property type="entry name" value="Cys_deSase_IscS"/>
</dbReference>
<dbReference type="InterPro" id="IPR016454">
    <property type="entry name" value="Cysteine_dSase"/>
</dbReference>
<dbReference type="InterPro" id="IPR015424">
    <property type="entry name" value="PyrdxlP-dep_Trfase"/>
</dbReference>
<dbReference type="InterPro" id="IPR015421">
    <property type="entry name" value="PyrdxlP-dep_Trfase_major"/>
</dbReference>
<dbReference type="InterPro" id="IPR015422">
    <property type="entry name" value="PyrdxlP-dep_Trfase_small"/>
</dbReference>
<dbReference type="NCBIfam" id="TIGR02006">
    <property type="entry name" value="IscS"/>
    <property type="match status" value="1"/>
</dbReference>
<dbReference type="NCBIfam" id="NF010611">
    <property type="entry name" value="PRK14012.1"/>
    <property type="match status" value="1"/>
</dbReference>
<dbReference type="PANTHER" id="PTHR11601:SF34">
    <property type="entry name" value="CYSTEINE DESULFURASE"/>
    <property type="match status" value="1"/>
</dbReference>
<dbReference type="PANTHER" id="PTHR11601">
    <property type="entry name" value="CYSTEINE DESULFURYLASE FAMILY MEMBER"/>
    <property type="match status" value="1"/>
</dbReference>
<dbReference type="Pfam" id="PF00266">
    <property type="entry name" value="Aminotran_5"/>
    <property type="match status" value="1"/>
</dbReference>
<dbReference type="PIRSF" id="PIRSF005572">
    <property type="entry name" value="NifS"/>
    <property type="match status" value="1"/>
</dbReference>
<dbReference type="SUPFAM" id="SSF53383">
    <property type="entry name" value="PLP-dependent transferases"/>
    <property type="match status" value="1"/>
</dbReference>
<dbReference type="PROSITE" id="PS00595">
    <property type="entry name" value="AA_TRANSFER_CLASS_5"/>
    <property type="match status" value="1"/>
</dbReference>
<accession>Q9VKD3</accession>
<accession>Q9VKD4</accession>
<gene>
    <name evidence="8 11" type="primary">Nfs1</name>
    <name evidence="11" type="ORF">CG12264</name>
</gene>
<evidence type="ECO:0000250" key="1">
    <source>
        <dbReference type="UniProtKB" id="O29689"/>
    </source>
</evidence>
<evidence type="ECO:0000250" key="2">
    <source>
        <dbReference type="UniProtKB" id="P0A6B7"/>
    </source>
</evidence>
<evidence type="ECO:0000250" key="3">
    <source>
        <dbReference type="UniProtKB" id="P0A6B9"/>
    </source>
</evidence>
<evidence type="ECO:0000250" key="4">
    <source>
        <dbReference type="UniProtKB" id="Q9Y697"/>
    </source>
</evidence>
<evidence type="ECO:0000255" key="5"/>
<evidence type="ECO:0000269" key="6">
    <source>
    </source>
</evidence>
<evidence type="ECO:0000269" key="7">
    <source>
    </source>
</evidence>
<evidence type="ECO:0000303" key="8">
    <source>
    </source>
</evidence>
<evidence type="ECO:0000305" key="9"/>
<evidence type="ECO:0000305" key="10">
    <source>
    </source>
</evidence>
<evidence type="ECO:0000312" key="11">
    <source>
        <dbReference type="FlyBase" id="FBgn0032393"/>
    </source>
</evidence>
<evidence type="ECO:0000312" key="12">
    <source>
        <dbReference type="Proteomes" id="UP000000803"/>
    </source>
</evidence>
<comment type="function">
    <text evidence="7">Catalyzes the removal of elemental sulfur from cysteine to produce alanine. It supplies the inorganic sulfur for iron-sulfur (Fe-S) clusters.</text>
</comment>
<comment type="catalytic activity">
    <reaction evidence="7">
        <text>(sulfur carrier)-H + L-cysteine = (sulfur carrier)-SH + L-alanine</text>
        <dbReference type="Rhea" id="RHEA:43892"/>
        <dbReference type="Rhea" id="RHEA-COMP:14737"/>
        <dbReference type="Rhea" id="RHEA-COMP:14739"/>
        <dbReference type="ChEBI" id="CHEBI:29917"/>
        <dbReference type="ChEBI" id="CHEBI:35235"/>
        <dbReference type="ChEBI" id="CHEBI:57972"/>
        <dbReference type="ChEBI" id="CHEBI:64428"/>
        <dbReference type="EC" id="2.8.1.7"/>
    </reaction>
</comment>
<comment type="cofactor">
    <cofactor evidence="7">
        <name>pyridoxal 5'-phosphate</name>
        <dbReference type="ChEBI" id="CHEBI:597326"/>
    </cofactor>
</comment>
<comment type="activity regulation">
    <text evidence="7 10">Active when in complex with bcn92/Isd11/Lyrm4 (Probable). L-cysteine binding kinetics are reduced in the presence of bcn92/Isd11/Lyrm4 and IscU (PubMed:29491838). Activity is regulated by other components of the mitochondrial core iron-sulfur cluster (ISC) complex; Activity is reduced in the presence of IscU but enhanced when both IscU and fh/frataxin are present (PubMed:29491838).</text>
</comment>
<comment type="biophysicochemical properties">
    <kinetics>
        <KM evidence="7">0.29 mM for L-cysteine (when in complex with bcn92, IscU and fh)</KM>
        <text evidence="7">kcat is 2.6 min(-1) with L-cysteine as a substrate (when in complex with bcn92, IscU and fh).</text>
    </kinetics>
</comment>
<comment type="subunit">
    <text evidence="7 10">Component of the mitochondrial core iron-sulfur cluster (ISC) assembly complex at least composed of the cystein desulfurase Nfs1, the scaffold protein IscU, the accessory protein bcn92/Isd11/Lyrm4, and probably fh/frataxin (PubMed:29491838). Interacts with bcn92/Isd11/Lyrm4 and IscU (PubMed:29491838).</text>
</comment>
<comment type="subcellular location">
    <subcellularLocation>
        <location evidence="4">Mitochondrion</location>
    </subcellularLocation>
    <subcellularLocation>
        <location evidence="4">Nucleus</location>
    </subcellularLocation>
</comment>
<comment type="tissue specificity">
    <text evidence="6">Ubiquitous expression at high levels in any life stage.</text>
</comment>
<comment type="similarity">
    <text evidence="9">Belongs to the class-V pyridoxal-phosphate-dependent aminotransferase family. NifS/IscS subfamily.</text>
</comment>